<dbReference type="EC" id="6.3.2.6" evidence="1"/>
<dbReference type="EMBL" id="AM999887">
    <property type="protein sequence ID" value="CAQ54983.1"/>
    <property type="molecule type" value="Genomic_DNA"/>
</dbReference>
<dbReference type="RefSeq" id="WP_007302276.1">
    <property type="nucleotide sequence ID" value="NC_010981.1"/>
</dbReference>
<dbReference type="SMR" id="B3CM64"/>
<dbReference type="KEGG" id="wpi:WP0875"/>
<dbReference type="eggNOG" id="COG0152">
    <property type="taxonomic scope" value="Bacteria"/>
</dbReference>
<dbReference type="HOGENOM" id="CLU_061495_2_0_5"/>
<dbReference type="UniPathway" id="UPA00074">
    <property type="reaction ID" value="UER00131"/>
</dbReference>
<dbReference type="Proteomes" id="UP000008814">
    <property type="component" value="Chromosome"/>
</dbReference>
<dbReference type="GO" id="GO:0005829">
    <property type="term" value="C:cytosol"/>
    <property type="evidence" value="ECO:0007669"/>
    <property type="project" value="TreeGrafter"/>
</dbReference>
<dbReference type="GO" id="GO:0005524">
    <property type="term" value="F:ATP binding"/>
    <property type="evidence" value="ECO:0007669"/>
    <property type="project" value="UniProtKB-KW"/>
</dbReference>
<dbReference type="GO" id="GO:0004639">
    <property type="term" value="F:phosphoribosylaminoimidazolesuccinocarboxamide synthase activity"/>
    <property type="evidence" value="ECO:0007669"/>
    <property type="project" value="UniProtKB-UniRule"/>
</dbReference>
<dbReference type="GO" id="GO:0006189">
    <property type="term" value="P:'de novo' IMP biosynthetic process"/>
    <property type="evidence" value="ECO:0007669"/>
    <property type="project" value="UniProtKB-UniRule"/>
</dbReference>
<dbReference type="GO" id="GO:0009236">
    <property type="term" value="P:cobalamin biosynthetic process"/>
    <property type="evidence" value="ECO:0007669"/>
    <property type="project" value="InterPro"/>
</dbReference>
<dbReference type="CDD" id="cd01415">
    <property type="entry name" value="SAICAR_synt_PurC"/>
    <property type="match status" value="1"/>
</dbReference>
<dbReference type="FunFam" id="3.30.470.20:FF:000006">
    <property type="entry name" value="Phosphoribosylaminoimidazole-succinocarboxamide synthase"/>
    <property type="match status" value="1"/>
</dbReference>
<dbReference type="Gene3D" id="3.30.470.20">
    <property type="entry name" value="ATP-grasp fold, B domain"/>
    <property type="match status" value="1"/>
</dbReference>
<dbReference type="Gene3D" id="3.30.200.20">
    <property type="entry name" value="Phosphorylase Kinase, domain 1"/>
    <property type="match status" value="1"/>
</dbReference>
<dbReference type="HAMAP" id="MF_00137">
    <property type="entry name" value="SAICAR_synth"/>
    <property type="match status" value="1"/>
</dbReference>
<dbReference type="InterPro" id="IPR028923">
    <property type="entry name" value="SAICAR_synt/ADE2_N"/>
</dbReference>
<dbReference type="InterPro" id="IPR033934">
    <property type="entry name" value="SAICAR_synt_PurC"/>
</dbReference>
<dbReference type="InterPro" id="IPR001636">
    <property type="entry name" value="SAICAR_synth"/>
</dbReference>
<dbReference type="InterPro" id="IPR050089">
    <property type="entry name" value="SAICAR_synthetase"/>
</dbReference>
<dbReference type="InterPro" id="IPR018236">
    <property type="entry name" value="SAICAR_synthetase_CS"/>
</dbReference>
<dbReference type="NCBIfam" id="TIGR00081">
    <property type="entry name" value="purC"/>
    <property type="match status" value="1"/>
</dbReference>
<dbReference type="PANTHER" id="PTHR43599">
    <property type="entry name" value="MULTIFUNCTIONAL PROTEIN ADE2"/>
    <property type="match status" value="1"/>
</dbReference>
<dbReference type="PANTHER" id="PTHR43599:SF3">
    <property type="entry name" value="SI:DKEY-6E2.2"/>
    <property type="match status" value="1"/>
</dbReference>
<dbReference type="Pfam" id="PF01259">
    <property type="entry name" value="SAICAR_synt"/>
    <property type="match status" value="1"/>
</dbReference>
<dbReference type="SUPFAM" id="SSF56104">
    <property type="entry name" value="SAICAR synthase-like"/>
    <property type="match status" value="1"/>
</dbReference>
<dbReference type="PROSITE" id="PS01057">
    <property type="entry name" value="SAICAR_SYNTHETASE_1"/>
    <property type="match status" value="1"/>
</dbReference>
<dbReference type="PROSITE" id="PS01058">
    <property type="entry name" value="SAICAR_SYNTHETASE_2"/>
    <property type="match status" value="1"/>
</dbReference>
<feature type="chain" id="PRO_1000096026" description="Phosphoribosylaminoimidazole-succinocarboxamide synthase">
    <location>
        <begin position="1"/>
        <end position="240"/>
    </location>
</feature>
<proteinExistence type="inferred from homology"/>
<protein>
    <recommendedName>
        <fullName evidence="1">Phosphoribosylaminoimidazole-succinocarboxamide synthase</fullName>
        <ecNumber evidence="1">6.3.2.6</ecNumber>
    </recommendedName>
    <alternativeName>
        <fullName evidence="1">SAICAR synthetase</fullName>
    </alternativeName>
</protein>
<gene>
    <name evidence="1" type="primary">purC</name>
    <name type="ordered locus">WP0875</name>
</gene>
<sequence>MSLNKTIYEGKAKVIIETEDSSTVIQYFKDDVTAFNKEKYEIIEGKGIINNHVSAFIMEKLEEAGISTHFINTLNEREQLVKKLKIIPLEVVVRNIAAGSFCKRFNIKEGEALTSPIIEFFYKNDDLADPMVNENHILYFGWLSHKEMEEVKTTTLKINKILVDLFSNANIYLVDLKLEFGKLINNSTKIILADEISPDNCRLWDKNTHKKLDKDVFRLNLGNLKEAYSEVAKRLSVKLD</sequence>
<comment type="catalytic activity">
    <reaction evidence="1">
        <text>5-amino-1-(5-phospho-D-ribosyl)imidazole-4-carboxylate + L-aspartate + ATP = (2S)-2-[5-amino-1-(5-phospho-beta-D-ribosyl)imidazole-4-carboxamido]succinate + ADP + phosphate + 2 H(+)</text>
        <dbReference type="Rhea" id="RHEA:22628"/>
        <dbReference type="ChEBI" id="CHEBI:15378"/>
        <dbReference type="ChEBI" id="CHEBI:29991"/>
        <dbReference type="ChEBI" id="CHEBI:30616"/>
        <dbReference type="ChEBI" id="CHEBI:43474"/>
        <dbReference type="ChEBI" id="CHEBI:58443"/>
        <dbReference type="ChEBI" id="CHEBI:77657"/>
        <dbReference type="ChEBI" id="CHEBI:456216"/>
        <dbReference type="EC" id="6.3.2.6"/>
    </reaction>
</comment>
<comment type="pathway">
    <text evidence="1">Purine metabolism; IMP biosynthesis via de novo pathway; 5-amino-1-(5-phospho-D-ribosyl)imidazole-4-carboxamide from 5-amino-1-(5-phospho-D-ribosyl)imidazole-4-carboxylate: step 1/2.</text>
</comment>
<comment type="similarity">
    <text evidence="1">Belongs to the SAICAR synthetase family.</text>
</comment>
<name>PUR7_WOLPP</name>
<reference key="1">
    <citation type="journal article" date="2008" name="Mol. Biol. Evol.">
        <title>Genome evolution of Wolbachia strain wPip from the Culex pipiens group.</title>
        <authorList>
            <person name="Klasson L."/>
            <person name="Walker T."/>
            <person name="Sebaihia M."/>
            <person name="Sanders M.J."/>
            <person name="Quail M.A."/>
            <person name="Lord A."/>
            <person name="Sanders S."/>
            <person name="Earl J."/>
            <person name="O'Neill S.L."/>
            <person name="Thomson N."/>
            <person name="Sinkins S.P."/>
            <person name="Parkhill J."/>
        </authorList>
    </citation>
    <scope>NUCLEOTIDE SEQUENCE [LARGE SCALE GENOMIC DNA]</scope>
    <source>
        <strain>wPip</strain>
    </source>
</reference>
<accession>B3CM64</accession>
<organism>
    <name type="scientific">Wolbachia pipientis subsp. Culex pipiens (strain wPip)</name>
    <dbReference type="NCBI Taxonomy" id="570417"/>
    <lineage>
        <taxon>Bacteria</taxon>
        <taxon>Pseudomonadati</taxon>
        <taxon>Pseudomonadota</taxon>
        <taxon>Alphaproteobacteria</taxon>
        <taxon>Rickettsiales</taxon>
        <taxon>Anaplasmataceae</taxon>
        <taxon>Wolbachieae</taxon>
        <taxon>Wolbachia</taxon>
    </lineage>
</organism>
<evidence type="ECO:0000255" key="1">
    <source>
        <dbReference type="HAMAP-Rule" id="MF_00137"/>
    </source>
</evidence>
<keyword id="KW-0067">ATP-binding</keyword>
<keyword id="KW-0436">Ligase</keyword>
<keyword id="KW-0547">Nucleotide-binding</keyword>
<keyword id="KW-0658">Purine biosynthesis</keyword>